<organism>
    <name type="scientific">Salmonella typhimurium (strain LT2 / SGSC1412 / ATCC 700720)</name>
    <dbReference type="NCBI Taxonomy" id="99287"/>
    <lineage>
        <taxon>Bacteria</taxon>
        <taxon>Pseudomonadati</taxon>
        <taxon>Pseudomonadota</taxon>
        <taxon>Gammaproteobacteria</taxon>
        <taxon>Enterobacterales</taxon>
        <taxon>Enterobacteriaceae</taxon>
        <taxon>Salmonella</taxon>
    </lineage>
</organism>
<protein>
    <recommendedName>
        <fullName evidence="1">DNA replication terminus site-binding protein</fullName>
        <shortName evidence="1">Ter-binding protein</shortName>
    </recommendedName>
</protein>
<reference key="1">
    <citation type="journal article" date="2001" name="Mol. Genet. Genomics">
        <title>Site-directed mutagenesis and phylogenetic comparisons of the Escherichia coli Tus protein: DNA-protein interactions alone cannot account for Tus activity.</title>
        <authorList>
            <person name="Henderson T.A."/>
            <person name="Nilles A.F."/>
            <person name="Valjavec-Gratian M."/>
            <person name="Hill T.M."/>
        </authorList>
    </citation>
    <scope>NUCLEOTIDE SEQUENCE [GENOMIC DNA]</scope>
    <source>
        <strain>LT2</strain>
    </source>
</reference>
<reference key="2">
    <citation type="journal article" date="2001" name="Nature">
        <title>Complete genome sequence of Salmonella enterica serovar Typhimurium LT2.</title>
        <authorList>
            <person name="McClelland M."/>
            <person name="Sanderson K.E."/>
            <person name="Spieth J."/>
            <person name="Clifton S.W."/>
            <person name="Latreille P."/>
            <person name="Courtney L."/>
            <person name="Porwollik S."/>
            <person name="Ali J."/>
            <person name="Dante M."/>
            <person name="Du F."/>
            <person name="Hou S."/>
            <person name="Layman D."/>
            <person name="Leonard S."/>
            <person name="Nguyen C."/>
            <person name="Scott K."/>
            <person name="Holmes A."/>
            <person name="Grewal N."/>
            <person name="Mulvaney E."/>
            <person name="Ryan E."/>
            <person name="Sun H."/>
            <person name="Florea L."/>
            <person name="Miller W."/>
            <person name="Stoneking T."/>
            <person name="Nhan M."/>
            <person name="Waterston R."/>
            <person name="Wilson R.K."/>
        </authorList>
    </citation>
    <scope>NUCLEOTIDE SEQUENCE [LARGE SCALE GENOMIC DNA]</scope>
    <source>
        <strain>LT2 / SGSC1412 / ATCC 700720</strain>
    </source>
</reference>
<gene>
    <name evidence="1" type="primary">tus</name>
    <name type="ordered locus">STM1470</name>
</gene>
<accession>O52714</accession>
<evidence type="ECO:0000255" key="1">
    <source>
        <dbReference type="HAMAP-Rule" id="MF_00483"/>
    </source>
</evidence>
<keyword id="KW-0963">Cytoplasm</keyword>
<keyword id="KW-0235">DNA replication</keyword>
<keyword id="KW-0238">DNA-binding</keyword>
<keyword id="KW-1185">Reference proteome</keyword>
<feature type="chain" id="PRO_0000049420" description="DNA replication terminus site-binding protein">
    <location>
        <begin position="1"/>
        <end position="309"/>
    </location>
</feature>
<sequence>MSRYDLVERLNGTFRQIEQHLAALTDNLQQHSLLIARVFSLPQVTKEAEHAPLDTIEVTQHLGKEAEALALRHYRHLFIQQQSENRSSKAAVRLPGVLCYQVDNATQLDLENQIQRINQLKTTFEQMVTVESGLPSAARFEWVHRHLPGLITLNAYRTLTLINNPATIRFGWANKHIIKNLSRDEVLSQLKKSLASPRSVPPWTREQWQFKLEREYQDIAALPQQARLKIKRPVKVQPISRIWYKGQQKQVQHACPTPIIALINTDNGAGVPDIGGLENYDADNIQHRFKPQAQPLRLIIPRLHLYVAD</sequence>
<dbReference type="EMBL" id="AF045242">
    <property type="protein sequence ID" value="AAC02704.2"/>
    <property type="molecule type" value="Genomic_DNA"/>
</dbReference>
<dbReference type="EMBL" id="AE006468">
    <property type="protein sequence ID" value="AAL20390.1"/>
    <property type="molecule type" value="Genomic_DNA"/>
</dbReference>
<dbReference type="RefSeq" id="NP_460431.1">
    <property type="nucleotide sequence ID" value="NC_003197.2"/>
</dbReference>
<dbReference type="RefSeq" id="WP_000092490.1">
    <property type="nucleotide sequence ID" value="NC_003197.2"/>
</dbReference>
<dbReference type="SMR" id="O52714"/>
<dbReference type="STRING" id="99287.STM1470"/>
<dbReference type="PaxDb" id="99287-STM1470"/>
<dbReference type="GeneID" id="1252988"/>
<dbReference type="KEGG" id="stm:STM1470"/>
<dbReference type="PATRIC" id="fig|99287.12.peg.1552"/>
<dbReference type="HOGENOM" id="CLU_078181_0_0_6"/>
<dbReference type="OMA" id="FGWANKN"/>
<dbReference type="PhylomeDB" id="O52714"/>
<dbReference type="BioCyc" id="SENT99287:STM1470-MONOMER"/>
<dbReference type="Proteomes" id="UP000001014">
    <property type="component" value="Chromosome"/>
</dbReference>
<dbReference type="GO" id="GO:0005737">
    <property type="term" value="C:cytoplasm"/>
    <property type="evidence" value="ECO:0007669"/>
    <property type="project" value="UniProtKB-SubCell"/>
</dbReference>
<dbReference type="GO" id="GO:0003677">
    <property type="term" value="F:DNA binding"/>
    <property type="evidence" value="ECO:0007669"/>
    <property type="project" value="UniProtKB-UniRule"/>
</dbReference>
<dbReference type="GO" id="GO:0006274">
    <property type="term" value="P:DNA replication termination"/>
    <property type="evidence" value="ECO:0007669"/>
    <property type="project" value="UniProtKB-UniRule"/>
</dbReference>
<dbReference type="Gene3D" id="3.30.54.10">
    <property type="match status" value="1"/>
</dbReference>
<dbReference type="Gene3D" id="3.50.14.10">
    <property type="entry name" value="Replication terminator Tus, domain 1 superfamily/Replication terminator Tus"/>
    <property type="match status" value="1"/>
</dbReference>
<dbReference type="HAMAP" id="MF_00483">
    <property type="entry name" value="Rep_term_Tus"/>
    <property type="match status" value="1"/>
</dbReference>
<dbReference type="InterPro" id="IPR008865">
    <property type="entry name" value="DNA_replication_term_site-bd"/>
</dbReference>
<dbReference type="InterPro" id="IPR036381">
    <property type="entry name" value="Tus_dom1"/>
</dbReference>
<dbReference type="InterPro" id="IPR036384">
    <property type="entry name" value="Tus_sf"/>
</dbReference>
<dbReference type="NCBIfam" id="TIGR02648">
    <property type="entry name" value="rep_term_tus"/>
    <property type="match status" value="1"/>
</dbReference>
<dbReference type="Pfam" id="PF05472">
    <property type="entry name" value="Ter"/>
    <property type="match status" value="1"/>
</dbReference>
<dbReference type="SUPFAM" id="SSF56596">
    <property type="entry name" value="Replication terminator protein (Tus)"/>
    <property type="match status" value="1"/>
</dbReference>
<proteinExistence type="inferred from homology"/>
<comment type="function">
    <text evidence="1">Trans-acting protein required for termination of DNA replication. Binds to DNA replication terminator sequences (terA to terF) to prevent the passage of replication forks. The termination efficiency will be affected by the affinity of this protein for the terminator sequence.</text>
</comment>
<comment type="subcellular location">
    <subcellularLocation>
        <location evidence="1">Cytoplasm</location>
    </subcellularLocation>
</comment>
<comment type="similarity">
    <text evidence="1">Belongs to the Tus family.</text>
</comment>
<name>TUS_SALTY</name>